<proteinExistence type="inferred from homology"/>
<feature type="chain" id="PRO_1000127962" description="Small ribosomal subunit protein uS19">
    <location>
        <begin position="1"/>
        <end position="92"/>
    </location>
</feature>
<accession>B8FET1</accession>
<organism>
    <name type="scientific">Desulfatibacillum aliphaticivorans</name>
    <dbReference type="NCBI Taxonomy" id="218208"/>
    <lineage>
        <taxon>Bacteria</taxon>
        <taxon>Pseudomonadati</taxon>
        <taxon>Thermodesulfobacteriota</taxon>
        <taxon>Desulfobacteria</taxon>
        <taxon>Desulfobacterales</taxon>
        <taxon>Desulfatibacillaceae</taxon>
        <taxon>Desulfatibacillum</taxon>
    </lineage>
</organism>
<dbReference type="EMBL" id="CP001322">
    <property type="protein sequence ID" value="ACL03608.1"/>
    <property type="molecule type" value="Genomic_DNA"/>
</dbReference>
<dbReference type="RefSeq" id="WP_012611039.1">
    <property type="nucleotide sequence ID" value="NC_011768.1"/>
</dbReference>
<dbReference type="SMR" id="B8FET1"/>
<dbReference type="KEGG" id="dal:Dalk_1911"/>
<dbReference type="eggNOG" id="COG0185">
    <property type="taxonomic scope" value="Bacteria"/>
</dbReference>
<dbReference type="HOGENOM" id="CLU_144911_0_1_7"/>
<dbReference type="Proteomes" id="UP000000739">
    <property type="component" value="Chromosome"/>
</dbReference>
<dbReference type="GO" id="GO:0005737">
    <property type="term" value="C:cytoplasm"/>
    <property type="evidence" value="ECO:0007669"/>
    <property type="project" value="UniProtKB-ARBA"/>
</dbReference>
<dbReference type="GO" id="GO:0015935">
    <property type="term" value="C:small ribosomal subunit"/>
    <property type="evidence" value="ECO:0007669"/>
    <property type="project" value="InterPro"/>
</dbReference>
<dbReference type="GO" id="GO:0019843">
    <property type="term" value="F:rRNA binding"/>
    <property type="evidence" value="ECO:0007669"/>
    <property type="project" value="UniProtKB-UniRule"/>
</dbReference>
<dbReference type="GO" id="GO:0003735">
    <property type="term" value="F:structural constituent of ribosome"/>
    <property type="evidence" value="ECO:0007669"/>
    <property type="project" value="InterPro"/>
</dbReference>
<dbReference type="GO" id="GO:0000028">
    <property type="term" value="P:ribosomal small subunit assembly"/>
    <property type="evidence" value="ECO:0007669"/>
    <property type="project" value="TreeGrafter"/>
</dbReference>
<dbReference type="GO" id="GO:0006412">
    <property type="term" value="P:translation"/>
    <property type="evidence" value="ECO:0007669"/>
    <property type="project" value="UniProtKB-UniRule"/>
</dbReference>
<dbReference type="FunFam" id="3.30.860.10:FF:000001">
    <property type="entry name" value="30S ribosomal protein S19"/>
    <property type="match status" value="1"/>
</dbReference>
<dbReference type="Gene3D" id="3.30.860.10">
    <property type="entry name" value="30s Ribosomal Protein S19, Chain A"/>
    <property type="match status" value="1"/>
</dbReference>
<dbReference type="HAMAP" id="MF_00531">
    <property type="entry name" value="Ribosomal_uS19"/>
    <property type="match status" value="1"/>
</dbReference>
<dbReference type="InterPro" id="IPR002222">
    <property type="entry name" value="Ribosomal_uS19"/>
</dbReference>
<dbReference type="InterPro" id="IPR005732">
    <property type="entry name" value="Ribosomal_uS19_bac-type"/>
</dbReference>
<dbReference type="InterPro" id="IPR020934">
    <property type="entry name" value="Ribosomal_uS19_CS"/>
</dbReference>
<dbReference type="InterPro" id="IPR023575">
    <property type="entry name" value="Ribosomal_uS19_SF"/>
</dbReference>
<dbReference type="NCBIfam" id="TIGR01050">
    <property type="entry name" value="rpsS_bact"/>
    <property type="match status" value="1"/>
</dbReference>
<dbReference type="PANTHER" id="PTHR11880">
    <property type="entry name" value="RIBOSOMAL PROTEIN S19P FAMILY MEMBER"/>
    <property type="match status" value="1"/>
</dbReference>
<dbReference type="PANTHER" id="PTHR11880:SF8">
    <property type="entry name" value="SMALL RIBOSOMAL SUBUNIT PROTEIN US19M"/>
    <property type="match status" value="1"/>
</dbReference>
<dbReference type="Pfam" id="PF00203">
    <property type="entry name" value="Ribosomal_S19"/>
    <property type="match status" value="1"/>
</dbReference>
<dbReference type="PIRSF" id="PIRSF002144">
    <property type="entry name" value="Ribosomal_S19"/>
    <property type="match status" value="1"/>
</dbReference>
<dbReference type="PRINTS" id="PR00975">
    <property type="entry name" value="RIBOSOMALS19"/>
</dbReference>
<dbReference type="SUPFAM" id="SSF54570">
    <property type="entry name" value="Ribosomal protein S19"/>
    <property type="match status" value="1"/>
</dbReference>
<dbReference type="PROSITE" id="PS00323">
    <property type="entry name" value="RIBOSOMAL_S19"/>
    <property type="match status" value="1"/>
</dbReference>
<comment type="function">
    <text evidence="1">Protein S19 forms a complex with S13 that binds strongly to the 16S ribosomal RNA.</text>
</comment>
<comment type="similarity">
    <text evidence="1">Belongs to the universal ribosomal protein uS19 family.</text>
</comment>
<keyword id="KW-1185">Reference proteome</keyword>
<keyword id="KW-0687">Ribonucleoprotein</keyword>
<keyword id="KW-0689">Ribosomal protein</keyword>
<keyword id="KW-0694">RNA-binding</keyword>
<keyword id="KW-0699">rRNA-binding</keyword>
<protein>
    <recommendedName>
        <fullName evidence="1">Small ribosomal subunit protein uS19</fullName>
    </recommendedName>
    <alternativeName>
        <fullName evidence="2">30S ribosomal protein S19</fullName>
    </alternativeName>
</protein>
<name>RS19_DESAL</name>
<sequence>MPRSLKKGPYIEPKLLNKVMVAQESRSKRVIRTWSRRSTIIPEMVGLTLAVHNGKKFLPVFVTENMVGHKLGEFSPTRTFYGHAGDKKTRGK</sequence>
<gene>
    <name evidence="1" type="primary">rpsS</name>
    <name type="ordered locus">Dalk_1911</name>
</gene>
<reference key="1">
    <citation type="journal article" date="2012" name="Environ. Microbiol.">
        <title>The genome sequence of Desulfatibacillum alkenivorans AK-01: a blueprint for anaerobic alkane oxidation.</title>
        <authorList>
            <person name="Callaghan A.V."/>
            <person name="Morris B.E."/>
            <person name="Pereira I.A."/>
            <person name="McInerney M.J."/>
            <person name="Austin R.N."/>
            <person name="Groves J.T."/>
            <person name="Kukor J.J."/>
            <person name="Suflita J.M."/>
            <person name="Young L.Y."/>
            <person name="Zylstra G.J."/>
            <person name="Wawrik B."/>
        </authorList>
    </citation>
    <scope>NUCLEOTIDE SEQUENCE [LARGE SCALE GENOMIC DNA]</scope>
    <source>
        <strain>AK-01</strain>
    </source>
</reference>
<evidence type="ECO:0000255" key="1">
    <source>
        <dbReference type="HAMAP-Rule" id="MF_00531"/>
    </source>
</evidence>
<evidence type="ECO:0000305" key="2"/>